<feature type="chain" id="PRO_0000081350" description="Probable transcriptional regulator ycf27">
    <location>
        <begin position="1"/>
        <end position="255"/>
    </location>
</feature>
<feature type="domain" description="Response regulatory" evidence="2">
    <location>
        <begin position="9"/>
        <end position="122"/>
    </location>
</feature>
<feature type="DNA-binding region" description="H-T-H motif" evidence="1">
    <location>
        <begin position="78"/>
        <end position="96"/>
    </location>
</feature>
<feature type="DNA-binding region" description="OmpR/PhoB-type" evidence="3">
    <location>
        <begin position="137"/>
        <end position="238"/>
    </location>
</feature>
<feature type="modified residue" description="4-aspartylphosphate" evidence="2">
    <location>
        <position position="58"/>
    </location>
</feature>
<sequence>MDNLRRKEKILIADDESSIRRILETRLSIIGYEVLTAPDGRSALFLFHKEHPNLVVLDVMMPKIDGYGVCQEIRKESDIPIIMLTALGDVTDRITGLELGADDYVVKPFSPKELEARIRCVLRRVDKFYFSNTFTNSGIINIGFLKIDINRKQVYKNEERIRLTGMEFNLLELLISNSGEPLSRTTILEEVWGYTPERHLDTRVVDVHISRLRAKLEDDPSNPELILTSRGTGYLFQRIMEINKNYNPIIQIQKI</sequence>
<evidence type="ECO:0000250" key="1"/>
<evidence type="ECO:0000255" key="2">
    <source>
        <dbReference type="PROSITE-ProRule" id="PRU00169"/>
    </source>
</evidence>
<evidence type="ECO:0000255" key="3">
    <source>
        <dbReference type="PROSITE-ProRule" id="PRU01091"/>
    </source>
</evidence>
<evidence type="ECO:0000305" key="4"/>
<gene>
    <name type="primary">ycf27</name>
    <name type="synonym">ompR</name>
</gene>
<organism>
    <name type="scientific">Galdieria sulphuraria</name>
    <name type="common">Red alga</name>
    <dbReference type="NCBI Taxonomy" id="130081"/>
    <lineage>
        <taxon>Eukaryota</taxon>
        <taxon>Rhodophyta</taxon>
        <taxon>Bangiophyceae</taxon>
        <taxon>Galdieriales</taxon>
        <taxon>Galdieriaceae</taxon>
        <taxon>Galdieria</taxon>
    </lineage>
</organism>
<keyword id="KW-0150">Chloroplast</keyword>
<keyword id="KW-0238">DNA-binding</keyword>
<keyword id="KW-0597">Phosphoprotein</keyword>
<keyword id="KW-0934">Plastid</keyword>
<keyword id="KW-0804">Transcription</keyword>
<keyword id="KW-0805">Transcription regulation</keyword>
<keyword id="KW-0902">Two-component regulatory system</keyword>
<accession>P28257</accession>
<name>YCF27_GALSU</name>
<comment type="function">
    <text>Probable promoter-specific protein mediating the interaction between DNA and RNA polymerase.</text>
</comment>
<comment type="subcellular location">
    <subcellularLocation>
        <location>Plastid</location>
        <location>Chloroplast</location>
    </subcellularLocation>
</comment>
<comment type="miscellaneous">
    <text evidence="4">Although originally identified as Cyanidium caldarium, these sequences derive from Galdieria sulphuraria.</text>
</comment>
<proteinExistence type="inferred from homology"/>
<protein>
    <recommendedName>
        <fullName>Probable transcriptional regulator ycf27</fullName>
    </recommendedName>
    <alternativeName>
        <fullName>OmpR-like protein</fullName>
    </alternativeName>
</protein>
<geneLocation type="chloroplast"/>
<reference key="1">
    <citation type="journal article" date="1992" name="Plant Mol. Biol.">
        <title>An equivalent to bacterial ompR genes is encoded on the plastid genome of red algae.</title>
        <authorList>
            <person name="Kessler U."/>
            <person name="Maid U."/>
            <person name="Zetsche K."/>
        </authorList>
    </citation>
    <scope>NUCLEOTIDE SEQUENCE [GENOMIC DNA]</scope>
    <source>
        <strain>14-1-1 / Isolate 107.79/Goettingen</strain>
    </source>
</reference>
<reference key="2">
    <citation type="journal article" date="1992" name="Plant Mol. Biol.">
        <title>A 16 kb small single-copy region separates the plastid DNA inverted repeat of the unicellular red alga Cyanidium caldarium: physical mapping of the IR-flanking regions and nucleotide sequences of the psbD, psbC, rps16, 5S rRNA and rpl21 genes.</title>
        <authorList>
            <person name="Maid U."/>
            <person name="Zetsche K."/>
        </authorList>
    </citation>
    <scope>NUCLEOTIDE SEQUENCE [GENOMIC DNA]</scope>
    <source>
        <strain>14-1-1 / Isolate 107.79/Goettingen</strain>
    </source>
</reference>
<dbReference type="EMBL" id="X62578">
    <property type="protein sequence ID" value="CAA44458.1"/>
    <property type="molecule type" value="Genomic_DNA"/>
</dbReference>
<dbReference type="SMR" id="P28257"/>
<dbReference type="eggNOG" id="KOG1601">
    <property type="taxonomic scope" value="Eukaryota"/>
</dbReference>
<dbReference type="GO" id="GO:0009507">
    <property type="term" value="C:chloroplast"/>
    <property type="evidence" value="ECO:0007669"/>
    <property type="project" value="UniProtKB-SubCell"/>
</dbReference>
<dbReference type="GO" id="GO:0005829">
    <property type="term" value="C:cytosol"/>
    <property type="evidence" value="ECO:0007669"/>
    <property type="project" value="TreeGrafter"/>
</dbReference>
<dbReference type="GO" id="GO:0032993">
    <property type="term" value="C:protein-DNA complex"/>
    <property type="evidence" value="ECO:0007669"/>
    <property type="project" value="TreeGrafter"/>
</dbReference>
<dbReference type="GO" id="GO:0000156">
    <property type="term" value="F:phosphorelay response regulator activity"/>
    <property type="evidence" value="ECO:0007669"/>
    <property type="project" value="TreeGrafter"/>
</dbReference>
<dbReference type="GO" id="GO:0000976">
    <property type="term" value="F:transcription cis-regulatory region binding"/>
    <property type="evidence" value="ECO:0007669"/>
    <property type="project" value="TreeGrafter"/>
</dbReference>
<dbReference type="GO" id="GO:0006355">
    <property type="term" value="P:regulation of DNA-templated transcription"/>
    <property type="evidence" value="ECO:0007669"/>
    <property type="project" value="InterPro"/>
</dbReference>
<dbReference type="CDD" id="cd17574">
    <property type="entry name" value="REC_OmpR"/>
    <property type="match status" value="1"/>
</dbReference>
<dbReference type="CDD" id="cd00383">
    <property type="entry name" value="trans_reg_C"/>
    <property type="match status" value="1"/>
</dbReference>
<dbReference type="FunFam" id="3.40.50.2300:FF:000001">
    <property type="entry name" value="DNA-binding response regulator PhoB"/>
    <property type="match status" value="1"/>
</dbReference>
<dbReference type="Gene3D" id="3.40.50.2300">
    <property type="match status" value="1"/>
</dbReference>
<dbReference type="Gene3D" id="1.10.10.10">
    <property type="entry name" value="Winged helix-like DNA-binding domain superfamily/Winged helix DNA-binding domain"/>
    <property type="match status" value="1"/>
</dbReference>
<dbReference type="InterPro" id="IPR011006">
    <property type="entry name" value="CheY-like_superfamily"/>
</dbReference>
<dbReference type="InterPro" id="IPR001867">
    <property type="entry name" value="OmpR/PhoB-type_DNA-bd"/>
</dbReference>
<dbReference type="InterPro" id="IPR016032">
    <property type="entry name" value="Sig_transdc_resp-reg_C-effctor"/>
</dbReference>
<dbReference type="InterPro" id="IPR001789">
    <property type="entry name" value="Sig_transdc_resp-reg_receiver"/>
</dbReference>
<dbReference type="InterPro" id="IPR039420">
    <property type="entry name" value="WalR-like"/>
</dbReference>
<dbReference type="InterPro" id="IPR036388">
    <property type="entry name" value="WH-like_DNA-bd_sf"/>
</dbReference>
<dbReference type="NCBIfam" id="NF045944">
    <property type="entry name" value="ResRegRpaBCyano"/>
    <property type="match status" value="1"/>
</dbReference>
<dbReference type="PANTHER" id="PTHR48111:SF65">
    <property type="entry name" value="OMPR SUBFAMILY"/>
    <property type="match status" value="1"/>
</dbReference>
<dbReference type="PANTHER" id="PTHR48111">
    <property type="entry name" value="REGULATOR OF RPOS"/>
    <property type="match status" value="1"/>
</dbReference>
<dbReference type="Pfam" id="PF00072">
    <property type="entry name" value="Response_reg"/>
    <property type="match status" value="1"/>
</dbReference>
<dbReference type="Pfam" id="PF00486">
    <property type="entry name" value="Trans_reg_C"/>
    <property type="match status" value="1"/>
</dbReference>
<dbReference type="SMART" id="SM00448">
    <property type="entry name" value="REC"/>
    <property type="match status" value="1"/>
</dbReference>
<dbReference type="SMART" id="SM00862">
    <property type="entry name" value="Trans_reg_C"/>
    <property type="match status" value="1"/>
</dbReference>
<dbReference type="SUPFAM" id="SSF46894">
    <property type="entry name" value="C-terminal effector domain of the bipartite response regulators"/>
    <property type="match status" value="1"/>
</dbReference>
<dbReference type="SUPFAM" id="SSF52172">
    <property type="entry name" value="CheY-like"/>
    <property type="match status" value="1"/>
</dbReference>
<dbReference type="PROSITE" id="PS51755">
    <property type="entry name" value="OMPR_PHOB"/>
    <property type="match status" value="1"/>
</dbReference>
<dbReference type="PROSITE" id="PS50110">
    <property type="entry name" value="RESPONSE_REGULATORY"/>
    <property type="match status" value="1"/>
</dbReference>